<dbReference type="EMBL" id="AF375475">
    <property type="protein sequence ID" value="AAK54640.1"/>
    <property type="molecule type" value="mRNA"/>
</dbReference>
<dbReference type="EMBL" id="AF375476">
    <property type="protein sequence ID" value="AAK54641.1"/>
    <property type="molecule type" value="mRNA"/>
</dbReference>
<dbReference type="EMBL" id="AF312938">
    <property type="protein sequence ID" value="AAG34160.1"/>
    <property type="molecule type" value="mRNA"/>
</dbReference>
<dbReference type="EMBL" id="AF310624">
    <property type="protein sequence ID" value="AAL55820.1"/>
    <property type="molecule type" value="mRNA"/>
</dbReference>
<dbReference type="EMBL" id="AY115107">
    <property type="protein sequence ID" value="AAM74470.1"/>
    <property type="molecule type" value="Genomic_DNA"/>
</dbReference>
<dbReference type="EMBL" id="BC010195">
    <property type="protein sequence ID" value="AAH10195.1"/>
    <property type="molecule type" value="mRNA"/>
</dbReference>
<dbReference type="EMBL" id="BC092068">
    <property type="protein sequence ID" value="AAH92068.1"/>
    <property type="molecule type" value="mRNA"/>
</dbReference>
<dbReference type="EMBL" id="AY024362">
    <property type="protein sequence ID" value="AAK00584.1"/>
    <property type="molecule type" value="mRNA"/>
</dbReference>
<dbReference type="EMBL" id="AB012276">
    <property type="protein sequence ID" value="BAA25313.1"/>
    <property type="molecule type" value="mRNA"/>
</dbReference>
<dbReference type="CCDS" id="CCDS21215.1"/>
<dbReference type="RefSeq" id="NP_109618.1">
    <property type="nucleotide sequence ID" value="NM_030693.2"/>
</dbReference>
<dbReference type="SMR" id="O70191"/>
<dbReference type="BioGRID" id="223346">
    <property type="interactions" value="2"/>
</dbReference>
<dbReference type="FunCoup" id="O70191">
    <property type="interactions" value="340"/>
</dbReference>
<dbReference type="IntAct" id="O70191">
    <property type="interactions" value="1"/>
</dbReference>
<dbReference type="STRING" id="10090.ENSMUSP00000047771"/>
<dbReference type="iPTMnet" id="O70191"/>
<dbReference type="PhosphoSitePlus" id="O70191"/>
<dbReference type="PaxDb" id="10090-ENSMUSP00000047771"/>
<dbReference type="Antibodypedia" id="18799">
    <property type="antibodies" value="299 antibodies from 32 providers"/>
</dbReference>
<dbReference type="DNASU" id="107503"/>
<dbReference type="Ensembl" id="ENSMUST00000047356.11">
    <property type="protein sequence ID" value="ENSMUSP00000047771.9"/>
    <property type="gene ID" value="ENSMUSG00000038539.16"/>
</dbReference>
<dbReference type="Ensembl" id="ENSMUST00000107893.9">
    <property type="protein sequence ID" value="ENSMUSP00000103525.2"/>
    <property type="gene ID" value="ENSMUSG00000038539.16"/>
</dbReference>
<dbReference type="GeneID" id="107503"/>
<dbReference type="KEGG" id="mmu:107503"/>
<dbReference type="UCSC" id="uc009gqu.2">
    <property type="organism name" value="mouse"/>
</dbReference>
<dbReference type="AGR" id="MGI:2141857"/>
<dbReference type="CTD" id="22809"/>
<dbReference type="MGI" id="MGI:2141857">
    <property type="gene designation" value="Atf5"/>
</dbReference>
<dbReference type="VEuPathDB" id="HostDB:ENSMUSG00000038539"/>
<dbReference type="eggNOG" id="KOG4571">
    <property type="taxonomic scope" value="Eukaryota"/>
</dbReference>
<dbReference type="GeneTree" id="ENSGT00530000063801"/>
<dbReference type="HOGENOM" id="CLU_083640_0_0_1"/>
<dbReference type="InParanoid" id="O70191"/>
<dbReference type="OMA" id="QGNEICA"/>
<dbReference type="OrthoDB" id="5847285at2759"/>
<dbReference type="PhylomeDB" id="O70191"/>
<dbReference type="TreeFam" id="TF316136"/>
<dbReference type="BioGRID-ORCS" id="107503">
    <property type="hits" value="1 hit in 79 CRISPR screens"/>
</dbReference>
<dbReference type="PRO" id="PR:O70191"/>
<dbReference type="Proteomes" id="UP000000589">
    <property type="component" value="Chromosome 7"/>
</dbReference>
<dbReference type="RNAct" id="O70191">
    <property type="molecule type" value="protein"/>
</dbReference>
<dbReference type="Bgee" id="ENSMUSG00000038539">
    <property type="expression patterns" value="Expressed in olfactory system and 243 other cell types or tissues"/>
</dbReference>
<dbReference type="ExpressionAtlas" id="O70191">
    <property type="expression patterns" value="baseline and differential"/>
</dbReference>
<dbReference type="GO" id="GO:0005813">
    <property type="term" value="C:centrosome"/>
    <property type="evidence" value="ECO:0000250"/>
    <property type="project" value="UniProtKB"/>
</dbReference>
<dbReference type="GO" id="GO:0005829">
    <property type="term" value="C:cytosol"/>
    <property type="evidence" value="ECO:0007669"/>
    <property type="project" value="Ensembl"/>
</dbReference>
<dbReference type="GO" id="GO:0005654">
    <property type="term" value="C:nucleoplasm"/>
    <property type="evidence" value="ECO:0000304"/>
    <property type="project" value="Reactome"/>
</dbReference>
<dbReference type="GO" id="GO:0005634">
    <property type="term" value="C:nucleus"/>
    <property type="evidence" value="ECO:0000314"/>
    <property type="project" value="UniProtKB"/>
</dbReference>
<dbReference type="GO" id="GO:0090575">
    <property type="term" value="C:RNA polymerase II transcription regulator complex"/>
    <property type="evidence" value="ECO:0007669"/>
    <property type="project" value="Ensembl"/>
</dbReference>
<dbReference type="GO" id="GO:0005667">
    <property type="term" value="C:transcription regulator complex"/>
    <property type="evidence" value="ECO:0000314"/>
    <property type="project" value="MGI"/>
</dbReference>
<dbReference type="GO" id="GO:0003682">
    <property type="term" value="F:chromatin binding"/>
    <property type="evidence" value="ECO:0000314"/>
    <property type="project" value="UniProtKB"/>
</dbReference>
<dbReference type="GO" id="GO:0001228">
    <property type="term" value="F:DNA-binding transcription activator activity, RNA polymerase II-specific"/>
    <property type="evidence" value="ECO:0007669"/>
    <property type="project" value="Ensembl"/>
</dbReference>
<dbReference type="GO" id="GO:0003700">
    <property type="term" value="F:DNA-binding transcription factor activity"/>
    <property type="evidence" value="ECO:0000250"/>
    <property type="project" value="UniProtKB"/>
</dbReference>
<dbReference type="GO" id="GO:0019900">
    <property type="term" value="F:kinase binding"/>
    <property type="evidence" value="ECO:0007669"/>
    <property type="project" value="Ensembl"/>
</dbReference>
<dbReference type="GO" id="GO:0000977">
    <property type="term" value="F:RNA polymerase II transcription regulatory region sequence-specific DNA binding"/>
    <property type="evidence" value="ECO:0007669"/>
    <property type="project" value="Ensembl"/>
</dbReference>
<dbReference type="GO" id="GO:0043565">
    <property type="term" value="F:sequence-specific DNA binding"/>
    <property type="evidence" value="ECO:0000314"/>
    <property type="project" value="UniProtKB"/>
</dbReference>
<dbReference type="GO" id="GO:0000976">
    <property type="term" value="F:transcription cis-regulatory region binding"/>
    <property type="evidence" value="ECO:0000314"/>
    <property type="project" value="UniProtKB"/>
</dbReference>
<dbReference type="GO" id="GO:0015631">
    <property type="term" value="F:tubulin binding"/>
    <property type="evidence" value="ECO:0007669"/>
    <property type="project" value="Ensembl"/>
</dbReference>
<dbReference type="GO" id="GO:0021930">
    <property type="term" value="P:cerebellar granule cell precursor proliferation"/>
    <property type="evidence" value="ECO:0000315"/>
    <property type="project" value="UniProtKB"/>
</dbReference>
<dbReference type="GO" id="GO:0007623">
    <property type="term" value="P:circadian rhythm"/>
    <property type="evidence" value="ECO:0000270"/>
    <property type="project" value="UniProtKB"/>
</dbReference>
<dbReference type="GO" id="GO:0045444">
    <property type="term" value="P:fat cell differentiation"/>
    <property type="evidence" value="ECO:0000315"/>
    <property type="project" value="UniProtKB"/>
</dbReference>
<dbReference type="GO" id="GO:0035264">
    <property type="term" value="P:multicellular organism growth"/>
    <property type="evidence" value="ECO:0000315"/>
    <property type="project" value="MGI"/>
</dbReference>
<dbReference type="GO" id="GO:0043066">
    <property type="term" value="P:negative regulation of apoptotic process"/>
    <property type="evidence" value="ECO:0000314"/>
    <property type="project" value="MGI"/>
</dbReference>
<dbReference type="GO" id="GO:1902750">
    <property type="term" value="P:negative regulation of cell cycle G2/M phase transition"/>
    <property type="evidence" value="ECO:0000250"/>
    <property type="project" value="UniProtKB"/>
</dbReference>
<dbReference type="GO" id="GO:0008285">
    <property type="term" value="P:negative regulation of cell population proliferation"/>
    <property type="evidence" value="ECO:0000250"/>
    <property type="project" value="UniProtKB"/>
</dbReference>
<dbReference type="GO" id="GO:0045892">
    <property type="term" value="P:negative regulation of DNA-templated transcription"/>
    <property type="evidence" value="ECO:0000250"/>
    <property type="project" value="UniProtKB"/>
</dbReference>
<dbReference type="GO" id="GO:0021891">
    <property type="term" value="P:olfactory bulb interneuron development"/>
    <property type="evidence" value="ECO:0000315"/>
    <property type="project" value="MGI"/>
</dbReference>
<dbReference type="GO" id="GO:0021889">
    <property type="term" value="P:olfactory bulb interneuron differentiation"/>
    <property type="evidence" value="ECO:0000315"/>
    <property type="project" value="MGI"/>
</dbReference>
<dbReference type="GO" id="GO:0021988">
    <property type="term" value="P:olfactory lobe development"/>
    <property type="evidence" value="ECO:0000315"/>
    <property type="project" value="MGI"/>
</dbReference>
<dbReference type="GO" id="GO:0045893">
    <property type="term" value="P:positive regulation of DNA-templated transcription"/>
    <property type="evidence" value="ECO:0000250"/>
    <property type="project" value="UniProtKB"/>
</dbReference>
<dbReference type="GO" id="GO:0009791">
    <property type="term" value="P:post-embryonic development"/>
    <property type="evidence" value="ECO:0000315"/>
    <property type="project" value="MGI"/>
</dbReference>
<dbReference type="GO" id="GO:0046605">
    <property type="term" value="P:regulation of centrosome cycle"/>
    <property type="evidence" value="ECO:0000250"/>
    <property type="project" value="UniProtKB"/>
</dbReference>
<dbReference type="GO" id="GO:0010468">
    <property type="term" value="P:regulation of gene expression"/>
    <property type="evidence" value="ECO:0000315"/>
    <property type="project" value="MGI"/>
</dbReference>
<dbReference type="GO" id="GO:0006357">
    <property type="term" value="P:regulation of transcription by RNA polymerase II"/>
    <property type="evidence" value="ECO:0000314"/>
    <property type="project" value="MGI"/>
</dbReference>
<dbReference type="CDD" id="cd14692">
    <property type="entry name" value="bZIP_ATF4"/>
    <property type="match status" value="1"/>
</dbReference>
<dbReference type="FunFam" id="1.20.5.170:FF:000021">
    <property type="entry name" value="Cyclic AMP-dependent transcription factor ATF-4"/>
    <property type="match status" value="1"/>
</dbReference>
<dbReference type="Gene3D" id="1.20.5.170">
    <property type="match status" value="1"/>
</dbReference>
<dbReference type="InterPro" id="IPR004827">
    <property type="entry name" value="bZIP"/>
</dbReference>
<dbReference type="InterPro" id="IPR046347">
    <property type="entry name" value="bZIP_sf"/>
</dbReference>
<dbReference type="PANTHER" id="PTHR13044">
    <property type="entry name" value="ACTIVATING TRANSCRIPTION FACTOR ATF 4/5"/>
    <property type="match status" value="1"/>
</dbReference>
<dbReference type="PANTHER" id="PTHR13044:SF3">
    <property type="entry name" value="CYCLIC AMP-DEPENDENT TRANSCRIPTION FACTOR ATF-5"/>
    <property type="match status" value="1"/>
</dbReference>
<dbReference type="Pfam" id="PF00170">
    <property type="entry name" value="bZIP_1"/>
    <property type="match status" value="1"/>
</dbReference>
<dbReference type="PRINTS" id="PR01217">
    <property type="entry name" value="PRICHEXTENSN"/>
</dbReference>
<dbReference type="SMART" id="SM00338">
    <property type="entry name" value="BRLZ"/>
    <property type="match status" value="1"/>
</dbReference>
<dbReference type="SUPFAM" id="SSF57959">
    <property type="entry name" value="Leucine zipper domain"/>
    <property type="match status" value="1"/>
</dbReference>
<dbReference type="PROSITE" id="PS50217">
    <property type="entry name" value="BZIP"/>
    <property type="match status" value="1"/>
</dbReference>
<feature type="chain" id="PRO_0000076587" description="Cyclic AMP-dependent transcription factor ATF-5">
    <location>
        <begin position="1"/>
        <end position="283"/>
    </location>
</feature>
<feature type="domain" description="bZIP" evidence="3">
    <location>
        <begin position="209"/>
        <end position="272"/>
    </location>
</feature>
<feature type="region of interest" description="Required for protein stabilization induced by IL1B" evidence="2">
    <location>
        <begin position="1"/>
        <end position="21"/>
    </location>
</feature>
<feature type="region of interest" description="Disordered" evidence="4">
    <location>
        <begin position="118"/>
        <end position="154"/>
    </location>
</feature>
<feature type="region of interest" description="Interaction with PTP4A1" evidence="5">
    <location>
        <begin position="119"/>
        <end position="218"/>
    </location>
</feature>
<feature type="region of interest" description="Disordered" evidence="4">
    <location>
        <begin position="168"/>
        <end position="241"/>
    </location>
</feature>
<feature type="region of interest" description="Basic motif" evidence="3">
    <location>
        <begin position="211"/>
        <end position="231"/>
    </location>
</feature>
<feature type="region of interest" description="Leucine-zipper" evidence="3">
    <location>
        <begin position="237"/>
        <end position="251"/>
    </location>
</feature>
<feature type="compositionally biased region" description="Pro residues" evidence="4">
    <location>
        <begin position="121"/>
        <end position="145"/>
    </location>
</feature>
<feature type="compositionally biased region" description="Pro residues" evidence="4">
    <location>
        <begin position="183"/>
        <end position="203"/>
    </location>
</feature>
<feature type="modified residue" description="N6-acetyllysine; by EP300" evidence="11">
    <location>
        <position position="29"/>
    </location>
</feature>
<feature type="modified residue" description="Phosphoserine" evidence="2">
    <location>
        <position position="257"/>
    </location>
</feature>
<feature type="mutagenesis site" description="Enhances interaction with CEBPB." evidence="11">
    <original>K</original>
    <variation>Q</variation>
    <location>
        <position position="29"/>
    </location>
</feature>
<feature type="mutagenesis site" description="Decreases acetylation levels and interaction with CEBPB." evidence="11">
    <original>K</original>
    <variation>R</variation>
    <location>
        <position position="29"/>
    </location>
</feature>
<feature type="sequence conflict" description="In Ref. 5; AAK00584." evidence="12" ref="5">
    <original>P</original>
    <variation>PLP</variation>
    <location>
        <position position="146"/>
    </location>
</feature>
<organism>
    <name type="scientific">Mus musculus</name>
    <name type="common">Mouse</name>
    <dbReference type="NCBI Taxonomy" id="10090"/>
    <lineage>
        <taxon>Eukaryota</taxon>
        <taxon>Metazoa</taxon>
        <taxon>Chordata</taxon>
        <taxon>Craniata</taxon>
        <taxon>Vertebrata</taxon>
        <taxon>Euteleostomi</taxon>
        <taxon>Mammalia</taxon>
        <taxon>Eutheria</taxon>
        <taxon>Euarchontoglires</taxon>
        <taxon>Glires</taxon>
        <taxon>Rodentia</taxon>
        <taxon>Myomorpha</taxon>
        <taxon>Muroidea</taxon>
        <taxon>Muridae</taxon>
        <taxon>Murinae</taxon>
        <taxon>Mus</taxon>
        <taxon>Mus</taxon>
    </lineage>
</organism>
<evidence type="ECO:0000250" key="1">
    <source>
        <dbReference type="UniProtKB" id="Q6P788"/>
    </source>
</evidence>
<evidence type="ECO:0000250" key="2">
    <source>
        <dbReference type="UniProtKB" id="Q9Y2D1"/>
    </source>
</evidence>
<evidence type="ECO:0000255" key="3">
    <source>
        <dbReference type="PROSITE-ProRule" id="PRU00978"/>
    </source>
</evidence>
<evidence type="ECO:0000256" key="4">
    <source>
        <dbReference type="SAM" id="MobiDB-lite"/>
    </source>
</evidence>
<evidence type="ECO:0000269" key="5">
    <source>
    </source>
</evidence>
<evidence type="ECO:0000269" key="6">
    <source>
    </source>
</evidence>
<evidence type="ECO:0000269" key="7">
    <source>
    </source>
</evidence>
<evidence type="ECO:0000269" key="8">
    <source>
    </source>
</evidence>
<evidence type="ECO:0000269" key="9">
    <source>
    </source>
</evidence>
<evidence type="ECO:0000269" key="10">
    <source>
    </source>
</evidence>
<evidence type="ECO:0000269" key="11">
    <source>
    </source>
</evidence>
<evidence type="ECO:0000305" key="12"/>
<protein>
    <recommendedName>
        <fullName>Cyclic AMP-dependent transcription factor ATF-5</fullName>
        <shortName>cAMP-dependent transcription factor ATF-5</shortName>
    </recommendedName>
    <alternativeName>
        <fullName>Activating transcription factor 5-alpha/beta</fullName>
    </alternativeName>
    <alternativeName>
        <fullName>BZIP protein ATF7</fullName>
    </alternativeName>
    <alternativeName>
        <fullName>NAP1</fullName>
    </alternativeName>
    <alternativeName>
        <fullName>NRIF3-associated protein</fullName>
    </alternativeName>
    <alternativeName>
        <fullName>Transcription factor ATFx</fullName>
    </alternativeName>
    <alternativeName>
        <fullName>Transcription factor-like protein ODA-10</fullName>
    </alternativeName>
</protein>
<reference key="1">
    <citation type="journal article" date="2002" name="Genomics">
        <title>Mouse Atf5: molecular cloning of two novel mRNAs, genomic organization, and odorant sensory neuron localization.</title>
        <authorList>
            <person name="Hansen M.B."/>
            <person name="Mitchelmore C."/>
            <person name="Kjaerulff K.M."/>
            <person name="Rasmussen T.E."/>
            <person name="Pedersen K.M."/>
            <person name="Jensen N.A."/>
        </authorList>
    </citation>
    <scope>NUCLEOTIDE SEQUENCE [MRNA]</scope>
    <scope>TISSUE SPECIFICITY</scope>
    <scope>DEVELOPMENTAL STAGE</scope>
    <source>
        <tissue>Brain</tissue>
    </source>
</reference>
<reference key="2">
    <citation type="journal article" date="2002" name="J. Biol. Chem.">
        <title>Cloning and characterization of human Siglec-11. A recently evolved signaling molecule that can interact with SHP-1 and SHP-2 and is expressed by tissue macrophages, including brain microglia.</title>
        <authorList>
            <person name="Angata T."/>
            <person name="Kerr S.C."/>
            <person name="Greaves D.R."/>
            <person name="Varki N.M."/>
            <person name="Crocker P.R."/>
            <person name="Varki A."/>
        </authorList>
    </citation>
    <scope>NUCLEOTIDE SEQUENCE [GENOMIC DNA]</scope>
</reference>
<reference key="3">
    <citation type="submission" date="2000-10" db="EMBL/GenBank/DDBJ databases">
        <title>The NRIF3-associated protein NAP1.</title>
        <authorList>
            <person name="Li D."/>
            <person name="Samuels H.H."/>
        </authorList>
    </citation>
    <scope>NUCLEOTIDE SEQUENCE [MRNA]</scope>
    <source>
        <strain>C57BL/6J</strain>
    </source>
</reference>
<reference key="4">
    <citation type="journal article" date="2004" name="Genome Res.">
        <title>The status, quality, and expansion of the NIH full-length cDNA project: the Mammalian Gene Collection (MGC).</title>
        <authorList>
            <consortium name="The MGC Project Team"/>
        </authorList>
    </citation>
    <scope>NUCLEOTIDE SEQUENCE [LARGE SCALE MRNA]</scope>
    <source>
        <strain>FVB/N</strain>
        <tissue>Liver</tissue>
        <tissue>Mammary gland</tissue>
    </source>
</reference>
<reference key="5">
    <citation type="journal article" date="2001" name="J. Biol. Chem.">
        <title>ATF-7, a novel bZIP protein, interacts with the PRL-1 protein-tyrosine phosphatase.</title>
        <authorList>
            <person name="Peters C.S."/>
            <person name="Liang X."/>
            <person name="Li S."/>
            <person name="Kannan S."/>
            <person name="Peng Y."/>
            <person name="Taub R."/>
            <person name="Diamond R.H."/>
        </authorList>
    </citation>
    <scope>NUCLEOTIDE SEQUENCE [MRNA] OF 67-283</scope>
    <scope>DNA-BINDING</scope>
    <scope>TISSUE SPECIFICITY</scope>
    <scope>INTERACTION WITH PTP4A1</scope>
    <source>
        <tissue>Adipocyte</tissue>
    </source>
</reference>
<reference key="6">
    <citation type="journal article" date="1992" name="FEBS Lett.">
        <title>cDNA clones encoding leucine-zipper proteins which interact with G-CSF gene promoter element 1-binding protein.</title>
        <authorList>
            <person name="Nishizawa M."/>
            <person name="Nagata S."/>
        </authorList>
    </citation>
    <scope>NUCLEOTIDE SEQUENCE [MRNA] OF 200-283</scope>
</reference>
<reference key="7">
    <citation type="journal article" date="2002" name="Genes Dev.">
        <title>Inhibition of apoptosis by ATFx: a novel role for a member of the ATF/CREB family of mammalian bZIP transcription factors.</title>
        <authorList>
            <person name="Persengiev S.P."/>
            <person name="Devireddy L.R."/>
            <person name="Green M.R."/>
        </authorList>
    </citation>
    <scope>INDUCTION</scope>
    <scope>FUNCTION</scope>
</reference>
<reference key="8">
    <citation type="journal article" date="2011" name="J. Biol. Chem.">
        <title>cAMP-response element (CRE)-mediated transcription by activating transcription factor-4 (ATF4) is essential for circadian expression of the Period2 gene.</title>
        <authorList>
            <person name="Koyanagi S."/>
            <person name="Hamdan A.M."/>
            <person name="Horiguchi M."/>
            <person name="Kusunose N."/>
            <person name="Okamoto A."/>
            <person name="Matsunaga N."/>
            <person name="Ohdo S."/>
        </authorList>
    </citation>
    <scope>INDUCTION</scope>
</reference>
<reference key="9">
    <citation type="journal article" date="2012" name="Dev. Neurobiol.">
        <title>Reciprocal actions of ATF5 and Shh in proliferation of cerebellar granule neuron progenitor cells.</title>
        <authorList>
            <person name="Lee H.Y."/>
            <person name="Angelastro J.M."/>
            <person name="Kenney A.M."/>
            <person name="Mason C.A."/>
            <person name="Greene L.A."/>
        </authorList>
    </citation>
    <scope>FUNCTION</scope>
    <scope>DEVELOPMENTAL STAGE</scope>
    <scope>SUBCELLULAR LOCATION</scope>
</reference>
<reference key="10">
    <citation type="journal article" date="2012" name="Proc. Natl. Acad. Sci. U.S.A.">
        <title>Transcription factor ATF5 is required for terminal differentiation and survival of olfactory sensory neurons.</title>
        <authorList>
            <person name="Wang S.Z."/>
            <person name="Ou J."/>
            <person name="Zhu L.J."/>
            <person name="Green M.R."/>
        </authorList>
    </citation>
    <scope>FUNCTION</scope>
    <scope>DEVELOPMENTAL STAGE</scope>
    <scope>DISRUPTION PHENOTYPE</scope>
    <scope>TISSUE SPECIFICITY</scope>
    <scope>INDUCTION BY RETINOIC ACID</scope>
</reference>
<reference key="11">
    <citation type="journal article" date="2014" name="Mol. Cell. Biol.">
        <title>p300-dependent acetylation of activating transcription factor 5 enhances C/EBPbeta transactivation of C/EBPalpha during 3T3-L1 differentiation.</title>
        <authorList>
            <person name="Zhao Y."/>
            <person name="Zhang Y.D."/>
            <person name="Zhang Y.Y."/>
            <person name="Qian S.W."/>
            <person name="Zhang Z.C."/>
            <person name="Li S.F."/>
            <person name="Guo L."/>
            <person name="Liu Y."/>
            <person name="Wen B."/>
            <person name="Lei Q.Y."/>
            <person name="Tang Q.Q."/>
            <person name="Li X."/>
        </authorList>
    </citation>
    <scope>FUNCTION</scope>
    <scope>INTERACTION WITH CEBPB AND EP300</scope>
    <scope>ACETYLATION AT LYS-29</scope>
    <scope>MUTAGENESIS OF LYS-29</scope>
</reference>
<comment type="function">
    <text evidence="1 2 6 9 10">Transcription factor that either stimulates or represses gene transcription through binding of different DNA regulatory elements such as cAMP response element (CRE) (consensus: 5'-GTGACGT[AC][AG]-3'), ATF5-specific response element (ARE) (consensus: 5'-C[CT]TCT[CT]CCTT[AT]-3') but also the amino acid response element (AARE), present in many viral and cellular promoters. Critically involved, often in a cell type-dependent manner, in cell survival, proliferation, and differentiation. Its transcriptional activity is enhanced by CCND3 and slightly inhibited by CDK4 (By similarity). Important regulator of the cerebral cortex formation, functions in cerebral cortical neuroprogenitor cells to maintain proliferation and to block differentiation into neurons. Must be down-regulated in order for such cells to exit the cycle and differentiate. Participates in the pathways by which SHH promotes cerebellar granule neuron progenitor cells proliferation (PubMed:22095825). Critical for survival of mature olfactory sensory neurons (OSN), directs expression of OSN-specific genes (PubMed:23090999). May be involved in osteogenic differentiation. Promotes cell proliferation and survival by inducing the expression of EGR1 sinergistically with ELK1. Once acetylated by EP300, binds to ARE sequences on target genes promoters, such as BCL2 and EGR1 (By similarity). Plays an anti-apoptotic role through the transcriptional regulation of BCL2, this function seems to be cell type-dependent (By similarity) (PubMed:12130540). Cooperates with NR1I3/CAR in the transcriptional activation of CYP2B6 in liver. In hepatic cells, represses CRE-dependent transcription and inhibits proliferation by blocking at G2/M phase. May act as a negative regulator of IL1B transduction pathway in liver. Upon IL1B stimulus, cooperates with NLK to activate the transactivation activity of C/EBP subfamily members. Besides its function of transcription factor, acts as a cofactor of CEBPB to activate CEBPA and promote adipocyte differentiation. Regulates centrosome dynamics in a cell-cycle- and centriole-age-dependent manner. Forms 9-foci symmetrical ring scaffold around the mother centriole to control centrosome function and the interaction between centrioles and pericentriolar material (By similarity).</text>
</comment>
<comment type="subunit">
    <text evidence="2 5 11">Binds DNA as a dimer. Interacts with PTP4A1/PRL-1 (By similarity). Interacts with CCND3, but not with CCND1 or CCND2. Interacts with HSPA1A or HSPA1B; the interaction protects ATF5 from degradation via proteasome-dependent and caspase-dependent processes. Interacts (via C-terminal region) with NPM1 (via C-terminal region); the interaction leads to loss of association between HSPA1A or HSPA1B and ATF5 and promotes ATF5 degradation via proteasome-dependent and caspase-dependent processes. Interacts with NLK; the interaction stabilizes ATF5 at the protein level in a kinase-independent manner. Interacts with alpha-tubulin, gamma-tubulin members TUBGCP2 and TUBGCP4, PCNT; the ATF5:PCNT:polyglutamylated tubulin (PGT) tripartite unites the mother centriole and the pericentriolar material (PCM) in the centrosome (By similarity). Interacts with CEBPB and EP300; EP300 is required for ATF5 and CEBPB interaction and DNA binding (PubMed:24216764).</text>
</comment>
<comment type="subcellular location">
    <subcellularLocation>
        <location evidence="2">Cytoplasm</location>
    </subcellularLocation>
    <subcellularLocation>
        <location evidence="9">Nucleus</location>
    </subcellularLocation>
    <subcellularLocation>
        <location evidence="2">Cytoplasm</location>
        <location evidence="2">Cytoskeleton</location>
        <location evidence="2">Microtubule organizing center</location>
        <location evidence="2">Centrosome</location>
    </subcellularLocation>
    <text evidence="2">Actively transported to the centrosome and accumulated in the pericentriolar material (PCM) during G1 to M phase via a microtubule-dependent mechanism. During late telophase and cytokinesis, translocates from the centrosome to the midbody.</text>
</comment>
<comment type="tissue specificity">
    <text evidence="5 7 10">Highly expressed in liver and at lower levels in heart, brain, lung, kidney, adipose tissue, and skeletal muscle. Expressed in some immature and in all mature olfactory sensory neurons (at protein level) (PubMed:23090999).</text>
</comment>
<comment type="developmental stage">
    <text evidence="7 9 10">Expressed in sensory neurons during embryonic development of the olfactory epithelium and vomeronasal organ. From, at least, 11.5 dpc through adulthood, expressed in the olfactory system. At 14.5 dpc, highly expressed in the olfactory epithelia, vomeronasal organ, the Grueneberg ganglion, the septal organ and the olfactory bulb (PubMed:23090999). At 14.5 dpc, expressed within germinal regions in the ventricular zone of the brain, the rhombic lip and the nascent external granule layer (EGL). At 16.5 dpc expression at the EGL is more intense and extensive. From P1 to P15, expressed in cerebellar granule neuron progenitor cells (CGNPs) of the EGL (PubMed:22095825).</text>
</comment>
<comment type="induction">
    <text evidence="6 8 10">Expressed in a circadian manner in the liver. Down-regulated by pro-apoptotic stimuli such IL3-deprivation that induce LCN2 expression (PubMed:12130540). In neural stem cells the expression is induced by retinoic acid (PubMed:23090999).</text>
</comment>
<comment type="PTM">
    <text evidence="11">Acetylated at Lys-29 by EP300, the acetylation enhances the interaction with CEBPB, DNA-binding and transactivation activity.</text>
</comment>
<comment type="PTM">
    <text evidence="2">Ubiquitinated by CDC34 and UBE2B in order to be degraded by the proteasome. Cisplatin inhibits ubiquitination and proteasome-mediated degradation by inhibiting the interaction with CDC34. Ubiquitination and degradation by the proteasome are inhibited by NLK in a kinase-independent manner.</text>
</comment>
<comment type="PTM">
    <text evidence="2">Phosphorylated by NLK, probably at Ser-92 and Ser-126.</text>
</comment>
<comment type="disruption phenotype">
    <text evidence="10">The majority of pups die within 48h after birth even if there is no major phenotypic differences at birth. Mice reveal a lack of milk in their stomach and show a dramatic loss of mature olfactory sensory neurons.</text>
</comment>
<comment type="similarity">
    <text evidence="12">Belongs to the bZIP family.</text>
</comment>
<keyword id="KW-0007">Acetylation</keyword>
<keyword id="KW-0010">Activator</keyword>
<keyword id="KW-0963">Cytoplasm</keyword>
<keyword id="KW-0206">Cytoskeleton</keyword>
<keyword id="KW-0238">DNA-binding</keyword>
<keyword id="KW-0539">Nucleus</keyword>
<keyword id="KW-0597">Phosphoprotein</keyword>
<keyword id="KW-1185">Reference proteome</keyword>
<keyword id="KW-0804">Transcription</keyword>
<keyword id="KW-0805">Transcription regulation</keyword>
<keyword id="KW-0832">Ubl conjugation</keyword>
<name>ATF5_MOUSE</name>
<sequence>MSLLATLGLELDRALLPASGLGWLVDYGKLPLAPAPLGPYEVLGGALEGGLPGGGEPLAGDGFSDWMTERVDFTALLPLEAPLPPGTLPPPSPAPPDLEAMASLLKKELEQMEDFFLDAPLLPPPSPPPPPPPAAAPSLPLPLPLPTFDLPQPPTLDTLDLLAVYCRSEAGPGDSGLSTLPVPQQPPPLAPLPSPARPAPYPSPASTRGDRKQKKRDQNKSAALRYRQRKRAEGEALEGECQGLEARNRELRERAESVEREIQYVKDLLIEVYKARSQRTRST</sequence>
<gene>
    <name type="primary">Atf5</name>
    <name type="synonym">Atfx</name>
    <name type="synonym">Nap1</name>
</gene>
<proteinExistence type="evidence at protein level"/>
<accession>O70191</accession>
<accession>Q58E51</accession>
<accession>Q99NH6</accession>